<accession>Q5RDW3</accession>
<evidence type="ECO:0000255" key="1">
    <source>
        <dbReference type="PROSITE-ProRule" id="PRU00184"/>
    </source>
</evidence>
<dbReference type="EMBL" id="CR857780">
    <property type="protein sequence ID" value="CAH90044.1"/>
    <property type="molecule type" value="mRNA"/>
</dbReference>
<dbReference type="RefSeq" id="NP_001127229.1">
    <property type="nucleotide sequence ID" value="NM_001133757.1"/>
</dbReference>
<dbReference type="SMR" id="Q5RDW3"/>
<dbReference type="FunCoup" id="Q5RDW3">
    <property type="interactions" value="42"/>
</dbReference>
<dbReference type="STRING" id="9601.ENSPPYP00000021135"/>
<dbReference type="Ensembl" id="ENSPPYT00000043920.1">
    <property type="protein sequence ID" value="ENSPPYP00000035054.1"/>
    <property type="gene ID" value="ENSPPYG00000018837.3"/>
</dbReference>
<dbReference type="GeneID" id="100174284"/>
<dbReference type="KEGG" id="pon:100174284"/>
<dbReference type="CTD" id="401474"/>
<dbReference type="eggNOG" id="ENOG502RXXU">
    <property type="taxonomic scope" value="Eukaryota"/>
</dbReference>
<dbReference type="GeneTree" id="ENSGT00390000008161"/>
<dbReference type="HOGENOM" id="CLU_105476_2_0_1"/>
<dbReference type="InParanoid" id="Q5RDW3"/>
<dbReference type="OrthoDB" id="434324at2759"/>
<dbReference type="TreeFam" id="TF325918"/>
<dbReference type="Proteomes" id="UP000001595">
    <property type="component" value="Chromosome 8"/>
</dbReference>
<dbReference type="GO" id="GO:0009898">
    <property type="term" value="C:cytoplasmic side of plasma membrane"/>
    <property type="evidence" value="ECO:0007669"/>
    <property type="project" value="TreeGrafter"/>
</dbReference>
<dbReference type="GO" id="GO:0007169">
    <property type="term" value="P:cell surface receptor protein tyrosine kinase signaling pathway"/>
    <property type="evidence" value="ECO:0007669"/>
    <property type="project" value="TreeGrafter"/>
</dbReference>
<dbReference type="CDD" id="cd09510">
    <property type="entry name" value="SAM_aveugle-like"/>
    <property type="match status" value="1"/>
</dbReference>
<dbReference type="Gene3D" id="1.10.150.50">
    <property type="entry name" value="Transcription Factor, Ets-1"/>
    <property type="match status" value="1"/>
</dbReference>
<dbReference type="InterPro" id="IPR039144">
    <property type="entry name" value="Aveugle-like_SAM_dom"/>
</dbReference>
<dbReference type="InterPro" id="IPR001660">
    <property type="entry name" value="SAM"/>
</dbReference>
<dbReference type="InterPro" id="IPR013761">
    <property type="entry name" value="SAM/pointed_sf"/>
</dbReference>
<dbReference type="InterPro" id="IPR052268">
    <property type="entry name" value="SAM_domain-containing_protein"/>
</dbReference>
<dbReference type="PANTHER" id="PTHR20843">
    <property type="entry name" value="STERILE ALPHA MOTIF DOMAIN CONTAINING PROTEIN 10"/>
    <property type="match status" value="1"/>
</dbReference>
<dbReference type="PANTHER" id="PTHR20843:SF2">
    <property type="entry name" value="STERILE ALPHA MOTIF DOMAIN-CONTAINING PROTEIN 12"/>
    <property type="match status" value="1"/>
</dbReference>
<dbReference type="Pfam" id="PF07647">
    <property type="entry name" value="SAM_2"/>
    <property type="match status" value="1"/>
</dbReference>
<dbReference type="SMART" id="SM00454">
    <property type="entry name" value="SAM"/>
    <property type="match status" value="1"/>
</dbReference>
<dbReference type="SUPFAM" id="SSF47769">
    <property type="entry name" value="SAM/Pointed domain"/>
    <property type="match status" value="1"/>
</dbReference>
<dbReference type="PROSITE" id="PS50105">
    <property type="entry name" value="SAM_DOMAIN"/>
    <property type="match status" value="1"/>
</dbReference>
<reference key="1">
    <citation type="submission" date="2004-11" db="EMBL/GenBank/DDBJ databases">
        <authorList>
            <consortium name="The German cDNA consortium"/>
        </authorList>
    </citation>
    <scope>NUCLEOTIDE SEQUENCE [LARGE SCALE MRNA]</scope>
    <source>
        <tissue>Kidney</tissue>
    </source>
</reference>
<sequence>MAVEALHCGLNPRGIDHPAHAEGIKLQIEGEGVESQSIKNKNFQKVPDQKGTPKRLQAEAETAKSATVKLSKPVALWTQQDVCKWLKKHCPNQYQIYSESFKQHDITGRALLRLTDKKLERMGIAQENLRQHILQQVLQLKVREEVRNLQLLTQGTLLLPDGWMEGEMRRKSTLLLGQTGVRENLLLFLRRISFIENSIQI</sequence>
<keyword id="KW-1185">Reference proteome</keyword>
<name>SAM12_PONAB</name>
<organism>
    <name type="scientific">Pongo abelii</name>
    <name type="common">Sumatran orangutan</name>
    <name type="synonym">Pongo pygmaeus abelii</name>
    <dbReference type="NCBI Taxonomy" id="9601"/>
    <lineage>
        <taxon>Eukaryota</taxon>
        <taxon>Metazoa</taxon>
        <taxon>Chordata</taxon>
        <taxon>Craniata</taxon>
        <taxon>Vertebrata</taxon>
        <taxon>Euteleostomi</taxon>
        <taxon>Mammalia</taxon>
        <taxon>Eutheria</taxon>
        <taxon>Euarchontoglires</taxon>
        <taxon>Primates</taxon>
        <taxon>Haplorrhini</taxon>
        <taxon>Catarrhini</taxon>
        <taxon>Hominidae</taxon>
        <taxon>Pongo</taxon>
    </lineage>
</organism>
<gene>
    <name type="primary">SAMD12</name>
</gene>
<feature type="chain" id="PRO_0000279504" description="Sterile alpha motif domain-containing protein 12">
    <location>
        <begin position="1"/>
        <end position="201"/>
    </location>
</feature>
<feature type="domain" description="SAM" evidence="1">
    <location>
        <begin position="77"/>
        <end position="143"/>
    </location>
</feature>
<protein>
    <recommendedName>
        <fullName>Sterile alpha motif domain-containing protein 12</fullName>
        <shortName>SAM domain-containing protein 12</shortName>
    </recommendedName>
</protein>
<proteinExistence type="evidence at transcript level"/>